<organism>
    <name type="scientific">Drimys granadensis</name>
    <dbReference type="NCBI Taxonomy" id="224735"/>
    <lineage>
        <taxon>Eukaryota</taxon>
        <taxon>Viridiplantae</taxon>
        <taxon>Streptophyta</taxon>
        <taxon>Embryophyta</taxon>
        <taxon>Tracheophyta</taxon>
        <taxon>Spermatophyta</taxon>
        <taxon>Magnoliopsida</taxon>
        <taxon>Magnoliidae</taxon>
        <taxon>Canellales</taxon>
        <taxon>Winteraceae</taxon>
        <taxon>Drimys</taxon>
    </lineage>
</organism>
<keyword id="KW-0150">Chloroplast</keyword>
<keyword id="KW-0472">Membrane</keyword>
<keyword id="KW-0602">Photosynthesis</keyword>
<keyword id="KW-0604">Photosystem II</keyword>
<keyword id="KW-0934">Plastid</keyword>
<keyword id="KW-0674">Reaction center</keyword>
<keyword id="KW-0793">Thylakoid</keyword>
<keyword id="KW-0812">Transmembrane</keyword>
<keyword id="KW-1133">Transmembrane helix</keyword>
<dbReference type="EMBL" id="DQ887676">
    <property type="protein sequence ID" value="ABH88281.1"/>
    <property type="molecule type" value="Genomic_DNA"/>
</dbReference>
<dbReference type="RefSeq" id="YP_784370.1">
    <property type="nucleotide sequence ID" value="NC_008456.1"/>
</dbReference>
<dbReference type="SMR" id="Q06H13"/>
<dbReference type="GeneID" id="4363629"/>
<dbReference type="GO" id="GO:0009535">
    <property type="term" value="C:chloroplast thylakoid membrane"/>
    <property type="evidence" value="ECO:0007669"/>
    <property type="project" value="UniProtKB-SubCell"/>
</dbReference>
<dbReference type="GO" id="GO:0009539">
    <property type="term" value="C:photosystem II reaction center"/>
    <property type="evidence" value="ECO:0007669"/>
    <property type="project" value="InterPro"/>
</dbReference>
<dbReference type="GO" id="GO:0015979">
    <property type="term" value="P:photosynthesis"/>
    <property type="evidence" value="ECO:0007669"/>
    <property type="project" value="UniProtKB-UniRule"/>
</dbReference>
<dbReference type="HAMAP" id="MF_01316">
    <property type="entry name" value="PSII_PsbI"/>
    <property type="match status" value="1"/>
</dbReference>
<dbReference type="InterPro" id="IPR003686">
    <property type="entry name" value="PSII_PsbI"/>
</dbReference>
<dbReference type="InterPro" id="IPR037271">
    <property type="entry name" value="PSII_PsbI_sf"/>
</dbReference>
<dbReference type="NCBIfam" id="NF002735">
    <property type="entry name" value="PRK02655.1"/>
    <property type="match status" value="1"/>
</dbReference>
<dbReference type="PANTHER" id="PTHR35772">
    <property type="entry name" value="PHOTOSYSTEM II REACTION CENTER PROTEIN I"/>
    <property type="match status" value="1"/>
</dbReference>
<dbReference type="PANTHER" id="PTHR35772:SF1">
    <property type="entry name" value="PHOTOSYSTEM II REACTION CENTER PROTEIN I"/>
    <property type="match status" value="1"/>
</dbReference>
<dbReference type="Pfam" id="PF02532">
    <property type="entry name" value="PsbI"/>
    <property type="match status" value="1"/>
</dbReference>
<dbReference type="SUPFAM" id="SSF161041">
    <property type="entry name" value="Photosystem II reaction center protein I, PsbI"/>
    <property type="match status" value="1"/>
</dbReference>
<evidence type="ECO:0000255" key="1">
    <source>
        <dbReference type="HAMAP-Rule" id="MF_01316"/>
    </source>
</evidence>
<name>PSBI_DRIGR</name>
<accession>Q06H13</accession>
<proteinExistence type="inferred from homology"/>
<reference key="1">
    <citation type="journal article" date="2006" name="BMC Evol. Biol.">
        <title>Complete plastid genome sequences of Drimys, Liriodendron, and Piper: implications for the phylogenetic relationships of magnoliids.</title>
        <authorList>
            <person name="Cai Z."/>
            <person name="Penaflor C."/>
            <person name="Kuehl J.V."/>
            <person name="Leebens-Mack J."/>
            <person name="Carlson J.E."/>
            <person name="dePamphilis C.W."/>
            <person name="Boore J.L."/>
            <person name="Jansen R.K."/>
        </authorList>
    </citation>
    <scope>NUCLEOTIDE SEQUENCE [LARGE SCALE GENOMIC DNA]</scope>
</reference>
<sequence length="36" mass="4168">MLTLKLFVYTVVIFFVSLFIFGFLSNDPGRNPGREE</sequence>
<comment type="function">
    <text evidence="1">One of the components of the core complex of photosystem II (PSII), required for its stability and/or assembly. PSII is a light-driven water:plastoquinone oxidoreductase that uses light energy to abstract electrons from H(2)O, generating O(2) and a proton gradient subsequently used for ATP formation. It consists of a core antenna complex that captures photons, and an electron transfer chain that converts photonic excitation into a charge separation.</text>
</comment>
<comment type="subunit">
    <text evidence="1">PSII is composed of 1 copy each of membrane proteins PsbA, PsbB, PsbC, PsbD, PsbE, PsbF, PsbH, PsbI, PsbJ, PsbK, PsbL, PsbM, PsbT, PsbX, PsbY, PsbZ, Psb30/Ycf12, at least 3 peripheral proteins of the oxygen-evolving complex and a large number of cofactors. It forms dimeric complexes.</text>
</comment>
<comment type="subcellular location">
    <subcellularLocation>
        <location evidence="1">Plastid</location>
        <location evidence="1">Chloroplast thylakoid membrane</location>
        <topology evidence="1">Single-pass membrane protein</topology>
    </subcellularLocation>
</comment>
<comment type="similarity">
    <text evidence="1">Belongs to the PsbI family.</text>
</comment>
<gene>
    <name evidence="1" type="primary">psbI</name>
</gene>
<protein>
    <recommendedName>
        <fullName evidence="1">Photosystem II reaction center protein I</fullName>
        <shortName evidence="1">PSII-I</shortName>
    </recommendedName>
    <alternativeName>
        <fullName evidence="1">PSII 4.8 kDa protein</fullName>
    </alternativeName>
</protein>
<geneLocation type="chloroplast"/>
<feature type="chain" id="PRO_0000275790" description="Photosystem II reaction center protein I">
    <location>
        <begin position="1"/>
        <end position="36"/>
    </location>
</feature>
<feature type="transmembrane region" description="Helical" evidence="1">
    <location>
        <begin position="4"/>
        <end position="24"/>
    </location>
</feature>